<feature type="chain" id="PRO_0000112242" description="Carbamoyl phosphate synthase small chain">
    <location>
        <begin position="1"/>
        <end position="379"/>
    </location>
</feature>
<feature type="domain" description="Glutamine amidotransferase type-1" evidence="1">
    <location>
        <begin position="192"/>
        <end position="379"/>
    </location>
</feature>
<feature type="region of interest" description="CPSase" evidence="1">
    <location>
        <begin position="1"/>
        <end position="188"/>
    </location>
</feature>
<feature type="active site" description="Nucleophile" evidence="1">
    <location>
        <position position="269"/>
    </location>
</feature>
<feature type="active site" evidence="1">
    <location>
        <position position="353"/>
    </location>
</feature>
<feature type="active site" evidence="1">
    <location>
        <position position="355"/>
    </location>
</feature>
<feature type="binding site" evidence="1">
    <location>
        <position position="47"/>
    </location>
    <ligand>
        <name>L-glutamine</name>
        <dbReference type="ChEBI" id="CHEBI:58359"/>
    </ligand>
</feature>
<feature type="binding site" evidence="1">
    <location>
        <position position="240"/>
    </location>
    <ligand>
        <name>L-glutamine</name>
        <dbReference type="ChEBI" id="CHEBI:58359"/>
    </ligand>
</feature>
<feature type="binding site" evidence="1">
    <location>
        <position position="242"/>
    </location>
    <ligand>
        <name>L-glutamine</name>
        <dbReference type="ChEBI" id="CHEBI:58359"/>
    </ligand>
</feature>
<feature type="binding site" evidence="1">
    <location>
        <position position="270"/>
    </location>
    <ligand>
        <name>L-glutamine</name>
        <dbReference type="ChEBI" id="CHEBI:58359"/>
    </ligand>
</feature>
<feature type="binding site" evidence="1">
    <location>
        <position position="273"/>
    </location>
    <ligand>
        <name>L-glutamine</name>
        <dbReference type="ChEBI" id="CHEBI:58359"/>
    </ligand>
</feature>
<feature type="binding site" evidence="1">
    <location>
        <position position="311"/>
    </location>
    <ligand>
        <name>L-glutamine</name>
        <dbReference type="ChEBI" id="CHEBI:58359"/>
    </ligand>
</feature>
<feature type="binding site" evidence="1">
    <location>
        <position position="313"/>
    </location>
    <ligand>
        <name>L-glutamine</name>
        <dbReference type="ChEBI" id="CHEBI:58359"/>
    </ligand>
</feature>
<feature type="binding site" evidence="1">
    <location>
        <position position="314"/>
    </location>
    <ligand>
        <name>L-glutamine</name>
        <dbReference type="ChEBI" id="CHEBI:58359"/>
    </ligand>
</feature>
<reference key="1">
    <citation type="journal article" date="2004" name="Nucleic Acids Res.">
        <title>Unique features revealed by the genome sequence of Acinetobacter sp. ADP1, a versatile and naturally transformation competent bacterium.</title>
        <authorList>
            <person name="Barbe V."/>
            <person name="Vallenet D."/>
            <person name="Fonknechten N."/>
            <person name="Kreimeyer A."/>
            <person name="Oztas S."/>
            <person name="Labarre L."/>
            <person name="Cruveiller S."/>
            <person name="Robert C."/>
            <person name="Duprat S."/>
            <person name="Wincker P."/>
            <person name="Ornston L.N."/>
            <person name="Weissenbach J."/>
            <person name="Marliere P."/>
            <person name="Cohen G.N."/>
            <person name="Medigue C."/>
        </authorList>
    </citation>
    <scope>NUCLEOTIDE SEQUENCE [LARGE SCALE GENOMIC DNA]</scope>
    <source>
        <strain>ATCC 33305 / BD413 / ADP1</strain>
    </source>
</reference>
<protein>
    <recommendedName>
        <fullName evidence="1">Carbamoyl phosphate synthase small chain</fullName>
        <ecNumber evidence="1">6.3.5.5</ecNumber>
    </recommendedName>
    <alternativeName>
        <fullName evidence="1">Carbamoyl phosphate synthetase glutamine chain</fullName>
    </alternativeName>
</protein>
<sequence>MSTPAILALADGTIFKGTSIGATGSTTGEVVFNTAMTGYQEILTDPSYAQQLVTLTYPHIGNTGCNEEDTESGRIHKVWANGLIIRDLPLLHSNFRSEQSLAEYLIQHNVVAIADIDTRKLTRILRDKGAQNGCILAGENITEEEALAKARAFGGLNGLDLAKECCDPNGFEWTEGSWELGKGFTQPELKYHVVAYDYGVKTNILRMLADRGCKLTVVPAQTPAEQVLALNPDGVFLSNGPGDPAACDYAIEAVKTIVETTNLPVFGICLGHQILALASGAKTMKMNHGHHGANHPVQNLEQGTVMITSQNHGFAVDESTLPANLKVTHRSLFDGTNQGIHRTDKPAFSFQGHPEASPGPHDCAPLFDHFIELIEAAKK</sequence>
<proteinExistence type="inferred from homology"/>
<evidence type="ECO:0000255" key="1">
    <source>
        <dbReference type="HAMAP-Rule" id="MF_01209"/>
    </source>
</evidence>
<dbReference type="EC" id="6.3.5.5" evidence="1"/>
<dbReference type="EMBL" id="CR543861">
    <property type="protein sequence ID" value="CAG69588.1"/>
    <property type="molecule type" value="Genomic_DNA"/>
</dbReference>
<dbReference type="RefSeq" id="WP_004929341.1">
    <property type="nucleotide sequence ID" value="NC_005966.1"/>
</dbReference>
<dbReference type="SMR" id="Q6F8M7"/>
<dbReference type="STRING" id="202950.GCA_001485005_03045"/>
<dbReference type="MEROPS" id="C26.954"/>
<dbReference type="GeneID" id="45235096"/>
<dbReference type="KEGG" id="aci:ACIAD2860"/>
<dbReference type="eggNOG" id="COG0505">
    <property type="taxonomic scope" value="Bacteria"/>
</dbReference>
<dbReference type="HOGENOM" id="CLU_035901_2_2_6"/>
<dbReference type="OrthoDB" id="9804328at2"/>
<dbReference type="BioCyc" id="ASP62977:ACIAD_RS12905-MONOMER"/>
<dbReference type="UniPathway" id="UPA00068">
    <property type="reaction ID" value="UER00171"/>
</dbReference>
<dbReference type="UniPathway" id="UPA00070">
    <property type="reaction ID" value="UER00115"/>
</dbReference>
<dbReference type="Proteomes" id="UP000000430">
    <property type="component" value="Chromosome"/>
</dbReference>
<dbReference type="GO" id="GO:0005524">
    <property type="term" value="F:ATP binding"/>
    <property type="evidence" value="ECO:0007669"/>
    <property type="project" value="UniProtKB-UniRule"/>
</dbReference>
<dbReference type="GO" id="GO:0004088">
    <property type="term" value="F:carbamoyl-phosphate synthase (glutamine-hydrolyzing) activity"/>
    <property type="evidence" value="ECO:0007669"/>
    <property type="project" value="UniProtKB-UniRule"/>
</dbReference>
<dbReference type="GO" id="GO:0004359">
    <property type="term" value="F:glutaminase activity"/>
    <property type="evidence" value="ECO:0007669"/>
    <property type="project" value="RHEA"/>
</dbReference>
<dbReference type="GO" id="GO:0006207">
    <property type="term" value="P:'de novo' pyrimidine nucleobase biosynthetic process"/>
    <property type="evidence" value="ECO:0007669"/>
    <property type="project" value="InterPro"/>
</dbReference>
<dbReference type="GO" id="GO:0044205">
    <property type="term" value="P:'de novo' UMP biosynthetic process"/>
    <property type="evidence" value="ECO:0007669"/>
    <property type="project" value="UniProtKB-UniRule"/>
</dbReference>
<dbReference type="GO" id="GO:0006541">
    <property type="term" value="P:glutamine metabolic process"/>
    <property type="evidence" value="ECO:0007669"/>
    <property type="project" value="InterPro"/>
</dbReference>
<dbReference type="GO" id="GO:0006526">
    <property type="term" value="P:L-arginine biosynthetic process"/>
    <property type="evidence" value="ECO:0007669"/>
    <property type="project" value="UniProtKB-UniRule"/>
</dbReference>
<dbReference type="CDD" id="cd01744">
    <property type="entry name" value="GATase1_CPSase"/>
    <property type="match status" value="1"/>
</dbReference>
<dbReference type="FunFam" id="3.40.50.880:FF:000011">
    <property type="entry name" value="Carbamoyl-phosphate synthase small chain"/>
    <property type="match status" value="1"/>
</dbReference>
<dbReference type="FunFam" id="3.50.30.20:FF:000001">
    <property type="entry name" value="Carbamoyl-phosphate synthase small chain"/>
    <property type="match status" value="1"/>
</dbReference>
<dbReference type="Gene3D" id="3.40.50.880">
    <property type="match status" value="1"/>
</dbReference>
<dbReference type="Gene3D" id="3.50.30.20">
    <property type="entry name" value="Carbamoyl-phosphate synthase small subunit, N-terminal domain"/>
    <property type="match status" value="1"/>
</dbReference>
<dbReference type="HAMAP" id="MF_01209">
    <property type="entry name" value="CPSase_S_chain"/>
    <property type="match status" value="1"/>
</dbReference>
<dbReference type="InterPro" id="IPR050472">
    <property type="entry name" value="Anth_synth/Amidotransfase"/>
</dbReference>
<dbReference type="InterPro" id="IPR006274">
    <property type="entry name" value="CarbamoylP_synth_ssu"/>
</dbReference>
<dbReference type="InterPro" id="IPR002474">
    <property type="entry name" value="CarbamoylP_synth_ssu_N"/>
</dbReference>
<dbReference type="InterPro" id="IPR036480">
    <property type="entry name" value="CarbP_synth_ssu_N_sf"/>
</dbReference>
<dbReference type="InterPro" id="IPR029062">
    <property type="entry name" value="Class_I_gatase-like"/>
</dbReference>
<dbReference type="InterPro" id="IPR035686">
    <property type="entry name" value="CPSase_GATase1"/>
</dbReference>
<dbReference type="InterPro" id="IPR017926">
    <property type="entry name" value="GATASE"/>
</dbReference>
<dbReference type="NCBIfam" id="TIGR01368">
    <property type="entry name" value="CPSaseIIsmall"/>
    <property type="match status" value="1"/>
</dbReference>
<dbReference type="NCBIfam" id="NF009475">
    <property type="entry name" value="PRK12838.1"/>
    <property type="match status" value="1"/>
</dbReference>
<dbReference type="PANTHER" id="PTHR43418:SF7">
    <property type="entry name" value="CARBAMOYL-PHOSPHATE SYNTHASE SMALL CHAIN"/>
    <property type="match status" value="1"/>
</dbReference>
<dbReference type="PANTHER" id="PTHR43418">
    <property type="entry name" value="MULTIFUNCTIONAL TRYPTOPHAN BIOSYNTHESIS PROTEIN-RELATED"/>
    <property type="match status" value="1"/>
</dbReference>
<dbReference type="Pfam" id="PF00988">
    <property type="entry name" value="CPSase_sm_chain"/>
    <property type="match status" value="1"/>
</dbReference>
<dbReference type="Pfam" id="PF00117">
    <property type="entry name" value="GATase"/>
    <property type="match status" value="1"/>
</dbReference>
<dbReference type="PRINTS" id="PR00097">
    <property type="entry name" value="ANTSNTHASEII"/>
</dbReference>
<dbReference type="PRINTS" id="PR00099">
    <property type="entry name" value="CPSGATASE"/>
</dbReference>
<dbReference type="PRINTS" id="PR00096">
    <property type="entry name" value="GATASE"/>
</dbReference>
<dbReference type="SMART" id="SM01097">
    <property type="entry name" value="CPSase_sm_chain"/>
    <property type="match status" value="1"/>
</dbReference>
<dbReference type="SUPFAM" id="SSF52021">
    <property type="entry name" value="Carbamoyl phosphate synthetase, small subunit N-terminal domain"/>
    <property type="match status" value="1"/>
</dbReference>
<dbReference type="SUPFAM" id="SSF52317">
    <property type="entry name" value="Class I glutamine amidotransferase-like"/>
    <property type="match status" value="1"/>
</dbReference>
<dbReference type="PROSITE" id="PS51273">
    <property type="entry name" value="GATASE_TYPE_1"/>
    <property type="match status" value="1"/>
</dbReference>
<accession>Q6F8M7</accession>
<organism>
    <name type="scientific">Acinetobacter baylyi (strain ATCC 33305 / BD413 / ADP1)</name>
    <dbReference type="NCBI Taxonomy" id="62977"/>
    <lineage>
        <taxon>Bacteria</taxon>
        <taxon>Pseudomonadati</taxon>
        <taxon>Pseudomonadota</taxon>
        <taxon>Gammaproteobacteria</taxon>
        <taxon>Moraxellales</taxon>
        <taxon>Moraxellaceae</taxon>
        <taxon>Acinetobacter</taxon>
    </lineage>
</organism>
<comment type="function">
    <text evidence="1">Small subunit of the glutamine-dependent carbamoyl phosphate synthetase (CPSase). CPSase catalyzes the formation of carbamoyl phosphate from the ammonia moiety of glutamine, carbonate, and phosphate donated by ATP, constituting the first step of 2 biosynthetic pathways, one leading to arginine and/or urea and the other to pyrimidine nucleotides. The small subunit (glutamine amidotransferase) binds and cleaves glutamine to supply the large subunit with the substrate ammonia.</text>
</comment>
<comment type="catalytic activity">
    <reaction evidence="1">
        <text>hydrogencarbonate + L-glutamine + 2 ATP + H2O = carbamoyl phosphate + L-glutamate + 2 ADP + phosphate + 2 H(+)</text>
        <dbReference type="Rhea" id="RHEA:18633"/>
        <dbReference type="ChEBI" id="CHEBI:15377"/>
        <dbReference type="ChEBI" id="CHEBI:15378"/>
        <dbReference type="ChEBI" id="CHEBI:17544"/>
        <dbReference type="ChEBI" id="CHEBI:29985"/>
        <dbReference type="ChEBI" id="CHEBI:30616"/>
        <dbReference type="ChEBI" id="CHEBI:43474"/>
        <dbReference type="ChEBI" id="CHEBI:58228"/>
        <dbReference type="ChEBI" id="CHEBI:58359"/>
        <dbReference type="ChEBI" id="CHEBI:456216"/>
        <dbReference type="EC" id="6.3.5.5"/>
    </reaction>
</comment>
<comment type="catalytic activity">
    <molecule>Carbamoyl phosphate synthase small chain</molecule>
    <reaction evidence="1">
        <text>L-glutamine + H2O = L-glutamate + NH4(+)</text>
        <dbReference type="Rhea" id="RHEA:15889"/>
        <dbReference type="ChEBI" id="CHEBI:15377"/>
        <dbReference type="ChEBI" id="CHEBI:28938"/>
        <dbReference type="ChEBI" id="CHEBI:29985"/>
        <dbReference type="ChEBI" id="CHEBI:58359"/>
    </reaction>
</comment>
<comment type="pathway">
    <text evidence="1">Amino-acid biosynthesis; L-arginine biosynthesis; carbamoyl phosphate from bicarbonate: step 1/1.</text>
</comment>
<comment type="pathway">
    <text evidence="1">Pyrimidine metabolism; UMP biosynthesis via de novo pathway; (S)-dihydroorotate from bicarbonate: step 1/3.</text>
</comment>
<comment type="subunit">
    <text evidence="1">Composed of two chains; the small (or glutamine) chain promotes the hydrolysis of glutamine to ammonia, which is used by the large (or ammonia) chain to synthesize carbamoyl phosphate. Tetramer of heterodimers (alpha,beta)4.</text>
</comment>
<comment type="similarity">
    <text evidence="1">Belongs to the CarA family.</text>
</comment>
<keyword id="KW-0028">Amino-acid biosynthesis</keyword>
<keyword id="KW-0055">Arginine biosynthesis</keyword>
<keyword id="KW-0067">ATP-binding</keyword>
<keyword id="KW-0315">Glutamine amidotransferase</keyword>
<keyword id="KW-0436">Ligase</keyword>
<keyword id="KW-0547">Nucleotide-binding</keyword>
<keyword id="KW-0665">Pyrimidine biosynthesis</keyword>
<name>CARA_ACIAD</name>
<gene>
    <name evidence="1" type="primary">carA</name>
    <name type="ordered locus">ACIAD2860</name>
</gene>